<dbReference type="EMBL" id="AF384685">
    <property type="protein sequence ID" value="AAN77259.1"/>
    <property type="molecule type" value="Genomic_DNA"/>
</dbReference>
<dbReference type="EMBL" id="CR848038">
    <property type="protein sequence ID" value="CAH63693.1"/>
    <property type="molecule type" value="Genomic_DNA"/>
</dbReference>
<dbReference type="RefSeq" id="WP_011096923.1">
    <property type="nucleotide sequence ID" value="NC_004552.2"/>
</dbReference>
<dbReference type="SMR" id="Q8GH79"/>
<dbReference type="KEGG" id="cab:CAB237"/>
<dbReference type="eggNOG" id="COG0443">
    <property type="taxonomic scope" value="Bacteria"/>
</dbReference>
<dbReference type="HOGENOM" id="CLU_005965_2_1_0"/>
<dbReference type="OrthoDB" id="9766019at2"/>
<dbReference type="Proteomes" id="UP000001012">
    <property type="component" value="Chromosome"/>
</dbReference>
<dbReference type="GO" id="GO:0005524">
    <property type="term" value="F:ATP binding"/>
    <property type="evidence" value="ECO:0007669"/>
    <property type="project" value="UniProtKB-UniRule"/>
</dbReference>
<dbReference type="GO" id="GO:0140662">
    <property type="term" value="F:ATP-dependent protein folding chaperone"/>
    <property type="evidence" value="ECO:0007669"/>
    <property type="project" value="InterPro"/>
</dbReference>
<dbReference type="GO" id="GO:0051082">
    <property type="term" value="F:unfolded protein binding"/>
    <property type="evidence" value="ECO:0007669"/>
    <property type="project" value="InterPro"/>
</dbReference>
<dbReference type="CDD" id="cd10234">
    <property type="entry name" value="ASKHA_NBD_HSP70_DnaK-like"/>
    <property type="match status" value="1"/>
</dbReference>
<dbReference type="FunFam" id="2.60.34.10:FF:000014">
    <property type="entry name" value="Chaperone protein DnaK HSP70"/>
    <property type="match status" value="1"/>
</dbReference>
<dbReference type="FunFam" id="3.30.420.40:FF:000020">
    <property type="entry name" value="Chaperone protein HscA homolog"/>
    <property type="match status" value="1"/>
</dbReference>
<dbReference type="FunFam" id="1.20.1270.10:FF:000001">
    <property type="entry name" value="Molecular chaperone DnaK"/>
    <property type="match status" value="1"/>
</dbReference>
<dbReference type="FunFam" id="3.30.420.40:FF:000004">
    <property type="entry name" value="Molecular chaperone DnaK"/>
    <property type="match status" value="1"/>
</dbReference>
<dbReference type="FunFam" id="3.90.640.10:FF:000003">
    <property type="entry name" value="Molecular chaperone DnaK"/>
    <property type="match status" value="1"/>
</dbReference>
<dbReference type="Gene3D" id="1.20.1270.10">
    <property type="match status" value="1"/>
</dbReference>
<dbReference type="Gene3D" id="3.30.420.40">
    <property type="match status" value="2"/>
</dbReference>
<dbReference type="Gene3D" id="3.90.640.10">
    <property type="entry name" value="Actin, Chain A, domain 4"/>
    <property type="match status" value="1"/>
</dbReference>
<dbReference type="Gene3D" id="2.60.34.10">
    <property type="entry name" value="Substrate Binding Domain Of DNAk, Chain A, domain 1"/>
    <property type="match status" value="1"/>
</dbReference>
<dbReference type="HAMAP" id="MF_00332">
    <property type="entry name" value="DnaK"/>
    <property type="match status" value="1"/>
</dbReference>
<dbReference type="InterPro" id="IPR043129">
    <property type="entry name" value="ATPase_NBD"/>
</dbReference>
<dbReference type="InterPro" id="IPR012725">
    <property type="entry name" value="Chaperone_DnaK"/>
</dbReference>
<dbReference type="InterPro" id="IPR018181">
    <property type="entry name" value="Heat_shock_70_CS"/>
</dbReference>
<dbReference type="InterPro" id="IPR029048">
    <property type="entry name" value="HSP70_C_sf"/>
</dbReference>
<dbReference type="InterPro" id="IPR029047">
    <property type="entry name" value="HSP70_peptide-bd_sf"/>
</dbReference>
<dbReference type="InterPro" id="IPR013126">
    <property type="entry name" value="Hsp_70_fam"/>
</dbReference>
<dbReference type="NCBIfam" id="NF001413">
    <property type="entry name" value="PRK00290.1"/>
    <property type="match status" value="1"/>
</dbReference>
<dbReference type="NCBIfam" id="TIGR02350">
    <property type="entry name" value="prok_dnaK"/>
    <property type="match status" value="1"/>
</dbReference>
<dbReference type="PANTHER" id="PTHR19375">
    <property type="entry name" value="HEAT SHOCK PROTEIN 70KDA"/>
    <property type="match status" value="1"/>
</dbReference>
<dbReference type="Pfam" id="PF00012">
    <property type="entry name" value="HSP70"/>
    <property type="match status" value="1"/>
</dbReference>
<dbReference type="PRINTS" id="PR00301">
    <property type="entry name" value="HEATSHOCK70"/>
</dbReference>
<dbReference type="SUPFAM" id="SSF53067">
    <property type="entry name" value="Actin-like ATPase domain"/>
    <property type="match status" value="2"/>
</dbReference>
<dbReference type="SUPFAM" id="SSF100934">
    <property type="entry name" value="Heat shock protein 70kD (HSP70), C-terminal subdomain"/>
    <property type="match status" value="1"/>
</dbReference>
<dbReference type="SUPFAM" id="SSF100920">
    <property type="entry name" value="Heat shock protein 70kD (HSP70), peptide-binding domain"/>
    <property type="match status" value="1"/>
</dbReference>
<dbReference type="PROSITE" id="PS00297">
    <property type="entry name" value="HSP70_1"/>
    <property type="match status" value="1"/>
</dbReference>
<dbReference type="PROSITE" id="PS00329">
    <property type="entry name" value="HSP70_2"/>
    <property type="match status" value="1"/>
</dbReference>
<dbReference type="PROSITE" id="PS01036">
    <property type="entry name" value="HSP70_3"/>
    <property type="match status" value="1"/>
</dbReference>
<reference key="1">
    <citation type="journal article" date="2002" name="Vet. Res.">
        <title>Protection evaluation against Chlamydophila abortus challenge by DNA vaccination with a dnaK-encoding plasmid in pregnant and non-pregnant mice.</title>
        <authorList>
            <person name="Hechard C."/>
            <person name="Grepinet O."/>
            <person name="Rodolakis A."/>
        </authorList>
    </citation>
    <scope>NUCLEOTIDE SEQUENCE [GENOMIC DNA]</scope>
    <source>
        <strain>AB7</strain>
    </source>
</reference>
<reference key="2">
    <citation type="journal article" date="2005" name="Genome Res.">
        <title>The Chlamydophila abortus genome sequence reveals an array of variable proteins that contribute to interspecies variation.</title>
        <authorList>
            <person name="Thomson N.R."/>
            <person name="Yeats C."/>
            <person name="Bell K."/>
            <person name="Holden M.T.G."/>
            <person name="Bentley S.D."/>
            <person name="Livingstone M."/>
            <person name="Cerdeno-Tarraga A.-M."/>
            <person name="Harris B."/>
            <person name="Doggett J."/>
            <person name="Ormond D."/>
            <person name="Mungall K."/>
            <person name="Clarke K."/>
            <person name="Feltwell T."/>
            <person name="Hance Z."/>
            <person name="Sanders M."/>
            <person name="Quail M.A."/>
            <person name="Price C."/>
            <person name="Barrell B.G."/>
            <person name="Parkhill J."/>
            <person name="Longbottom D."/>
        </authorList>
    </citation>
    <scope>NUCLEOTIDE SEQUENCE [LARGE SCALE GENOMIC DNA]</scope>
    <source>
        <strain>DSM 27085 / S26/3</strain>
    </source>
</reference>
<accession>Q8GH79</accession>
<accession>Q5L6M8</accession>
<organism>
    <name type="scientific">Chlamydia abortus (strain DSM 27085 / S26/3)</name>
    <name type="common">Chlamydophila abortus</name>
    <dbReference type="NCBI Taxonomy" id="218497"/>
    <lineage>
        <taxon>Bacteria</taxon>
        <taxon>Pseudomonadati</taxon>
        <taxon>Chlamydiota</taxon>
        <taxon>Chlamydiia</taxon>
        <taxon>Chlamydiales</taxon>
        <taxon>Chlamydiaceae</taxon>
        <taxon>Chlamydia/Chlamydophila group</taxon>
        <taxon>Chlamydia</taxon>
    </lineage>
</organism>
<proteinExistence type="inferred from homology"/>
<sequence length="659" mass="71104">MSEQKKSSKIIGIDLGTTNSCVSVMEGGQAKVIVSSEGTRTTPSIVAFKGNETLVGIPAKRQAVTNPAKTLASTKRFIGRKYSEVESEIKTVPYQVASGSNGDVVFPIDGKQFTPEEIGAQVLIKMKETAEAYLGEPVTEAVITVPAYFNDSQRASTKDAGRIAGLDVKRIIPEPTAAALAYGIDKAGDKKIAVFDLGGGTFDISILEIGDGVFEVLSTNGDTHLGGDDFDEVIIKWMIEEFQKQEGIDLSKDNMALQRLKDAAEKAKIELSGMSSTEINQPFITMDANGPKHLTLTLTRAHFEKLASNLIERTKAPCQKALADAKLAASDIDDVLLVGGMSRMPAVQEVVKSIFGKEPNKGVNPDEVVAIGAAIQGGVLGGEVKDVLLLDVIPLSLGIETLGGVMTPLVERNTTIPTQKKQIFSTAADNQPAVTIVVLQGERPMAKDNKEIGRFDLTDIPPAPRGHPQIEVTFDIDANGILHVSAKDAASGREQKIRIEASSGLKEDEIQRMINDAEKNKEEDKKRREASDVRNEADSMIFRAEKAISDYKENIPESLTKEIEERIEKVRSALKEDAPTEKIKEASDELSRHMQKIGEAMQSQSASAAANAQDGPNINTEDLKKHSFSTKPPTGNSSSSANNENIEEADVEIVDKPND</sequence>
<keyword id="KW-0067">ATP-binding</keyword>
<keyword id="KW-0143">Chaperone</keyword>
<keyword id="KW-0547">Nucleotide-binding</keyword>
<keyword id="KW-0597">Phosphoprotein</keyword>
<keyword id="KW-0346">Stress response</keyword>
<protein>
    <recommendedName>
        <fullName evidence="1">Chaperone protein DnaK</fullName>
    </recommendedName>
    <alternativeName>
        <fullName evidence="1">HSP70</fullName>
    </alternativeName>
    <alternativeName>
        <fullName evidence="1">Heat shock 70 kDa protein</fullName>
    </alternativeName>
    <alternativeName>
        <fullName evidence="1">Heat shock protein 70</fullName>
    </alternativeName>
</protein>
<name>DNAK_CHLAB</name>
<evidence type="ECO:0000255" key="1">
    <source>
        <dbReference type="HAMAP-Rule" id="MF_00332"/>
    </source>
</evidence>
<evidence type="ECO:0000256" key="2">
    <source>
        <dbReference type="SAM" id="MobiDB-lite"/>
    </source>
</evidence>
<evidence type="ECO:0000305" key="3"/>
<feature type="chain" id="PRO_0000078441" description="Chaperone protein DnaK">
    <location>
        <begin position="1"/>
        <end position="659"/>
    </location>
</feature>
<feature type="region of interest" description="Disordered" evidence="2">
    <location>
        <begin position="571"/>
        <end position="659"/>
    </location>
</feature>
<feature type="compositionally biased region" description="Basic and acidic residues" evidence="2">
    <location>
        <begin position="571"/>
        <end position="592"/>
    </location>
</feature>
<feature type="compositionally biased region" description="Low complexity" evidence="2">
    <location>
        <begin position="600"/>
        <end position="613"/>
    </location>
</feature>
<feature type="modified residue" description="Phosphothreonine; by autocatalysis" evidence="1">
    <location>
        <position position="201"/>
    </location>
</feature>
<feature type="sequence conflict" description="In Ref. 1; AAN77259." evidence="3" ref="1">
    <original>A</original>
    <variation>S</variation>
    <location>
        <position position="328"/>
    </location>
</feature>
<gene>
    <name evidence="1" type="primary">dnaK</name>
    <name type="ordered locus">CAB237</name>
</gene>
<comment type="function">
    <text evidence="1">Acts as a chaperone.</text>
</comment>
<comment type="induction">
    <text evidence="1">By stress conditions e.g. heat shock.</text>
</comment>
<comment type="similarity">
    <text evidence="1">Belongs to the heat shock protein 70 family.</text>
</comment>